<evidence type="ECO:0000250" key="1">
    <source>
        <dbReference type="UniProtKB" id="B2RXB0"/>
    </source>
</evidence>
<evidence type="ECO:0000250" key="2">
    <source>
        <dbReference type="UniProtKB" id="Q5RJN7"/>
    </source>
</evidence>
<evidence type="ECO:0000269" key="3">
    <source>
    </source>
</evidence>
<evidence type="ECO:0000269" key="4">
    <source>
    </source>
</evidence>
<evidence type="ECO:0000303" key="5">
    <source>
    </source>
</evidence>
<evidence type="ECO:0000305" key="6"/>
<evidence type="ECO:0000312" key="7">
    <source>
        <dbReference type="HGNC" id="HGNC:27998"/>
    </source>
</evidence>
<proteinExistence type="evidence at protein level"/>
<reference key="1">
    <citation type="journal article" date="2003" name="Nature">
        <title>The DNA sequence of human chromosome 7.</title>
        <authorList>
            <person name="Hillier L.W."/>
            <person name="Fulton R.S."/>
            <person name="Fulton L.A."/>
            <person name="Graves T.A."/>
            <person name="Pepin K.H."/>
            <person name="Wagner-McPherson C."/>
            <person name="Layman D."/>
            <person name="Maas J."/>
            <person name="Jaeger S."/>
            <person name="Walker R."/>
            <person name="Wylie K."/>
            <person name="Sekhon M."/>
            <person name="Becker M.C."/>
            <person name="O'Laughlin M.D."/>
            <person name="Schaller M.E."/>
            <person name="Fewell G.A."/>
            <person name="Delehaunty K.D."/>
            <person name="Miner T.L."/>
            <person name="Nash W.E."/>
            <person name="Cordes M."/>
            <person name="Du H."/>
            <person name="Sun H."/>
            <person name="Edwards J."/>
            <person name="Bradshaw-Cordum H."/>
            <person name="Ali J."/>
            <person name="Andrews S."/>
            <person name="Isak A."/>
            <person name="Vanbrunt A."/>
            <person name="Nguyen C."/>
            <person name="Du F."/>
            <person name="Lamar B."/>
            <person name="Courtney L."/>
            <person name="Kalicki J."/>
            <person name="Ozersky P."/>
            <person name="Bielicki L."/>
            <person name="Scott K."/>
            <person name="Holmes A."/>
            <person name="Harkins R."/>
            <person name="Harris A."/>
            <person name="Strong C.M."/>
            <person name="Hou S."/>
            <person name="Tomlinson C."/>
            <person name="Dauphin-Kohlberg S."/>
            <person name="Kozlowicz-Reilly A."/>
            <person name="Leonard S."/>
            <person name="Rohlfing T."/>
            <person name="Rock S.M."/>
            <person name="Tin-Wollam A.-M."/>
            <person name="Abbott A."/>
            <person name="Minx P."/>
            <person name="Maupin R."/>
            <person name="Strowmatt C."/>
            <person name="Latreille P."/>
            <person name="Miller N."/>
            <person name="Johnson D."/>
            <person name="Murray J."/>
            <person name="Woessner J.P."/>
            <person name="Wendl M.C."/>
            <person name="Yang S.-P."/>
            <person name="Schultz B.R."/>
            <person name="Wallis J.W."/>
            <person name="Spieth J."/>
            <person name="Bieri T.A."/>
            <person name="Nelson J.O."/>
            <person name="Berkowicz N."/>
            <person name="Wohldmann P.E."/>
            <person name="Cook L.L."/>
            <person name="Hickenbotham M.T."/>
            <person name="Eldred J."/>
            <person name="Williams D."/>
            <person name="Bedell J.A."/>
            <person name="Mardis E.R."/>
            <person name="Clifton S.W."/>
            <person name="Chissoe S.L."/>
            <person name="Marra M.A."/>
            <person name="Raymond C."/>
            <person name="Haugen E."/>
            <person name="Gillett W."/>
            <person name="Zhou Y."/>
            <person name="James R."/>
            <person name="Phelps K."/>
            <person name="Iadanoto S."/>
            <person name="Bubb K."/>
            <person name="Simms E."/>
            <person name="Levy R."/>
            <person name="Clendenning J."/>
            <person name="Kaul R."/>
            <person name="Kent W.J."/>
            <person name="Furey T.S."/>
            <person name="Baertsch R.A."/>
            <person name="Brent M.R."/>
            <person name="Keibler E."/>
            <person name="Flicek P."/>
            <person name="Bork P."/>
            <person name="Suyama M."/>
            <person name="Bailey J.A."/>
            <person name="Portnoy M.E."/>
            <person name="Torrents D."/>
            <person name="Chinwalla A.T."/>
            <person name="Gish W.R."/>
            <person name="Eddy S.R."/>
            <person name="McPherson J.D."/>
            <person name="Olson M.V."/>
            <person name="Eichler E.E."/>
            <person name="Green E.D."/>
            <person name="Waterston R.H."/>
            <person name="Wilson R.K."/>
        </authorList>
    </citation>
    <scope>NUCLEOTIDE SEQUENCE [LARGE SCALE GENOMIC DNA]</scope>
</reference>
<reference key="2">
    <citation type="journal article" date="2003" name="Science">
        <title>Human chromosome 7: DNA sequence and biology.</title>
        <authorList>
            <person name="Scherer S.W."/>
            <person name="Cheung J."/>
            <person name="MacDonald J.R."/>
            <person name="Osborne L.R."/>
            <person name="Nakabayashi K."/>
            <person name="Herbrick J.-A."/>
            <person name="Carson A.R."/>
            <person name="Parker-Katiraee L."/>
            <person name="Skaug J."/>
            <person name="Khaja R."/>
            <person name="Zhang J."/>
            <person name="Hudek A.K."/>
            <person name="Li M."/>
            <person name="Haddad M."/>
            <person name="Duggan G.E."/>
            <person name="Fernandez B.A."/>
            <person name="Kanematsu E."/>
            <person name="Gentles S."/>
            <person name="Christopoulos C.C."/>
            <person name="Choufani S."/>
            <person name="Kwasnicka D."/>
            <person name="Zheng X.H."/>
            <person name="Lai Z."/>
            <person name="Nusskern D.R."/>
            <person name="Zhang Q."/>
            <person name="Gu Z."/>
            <person name="Lu F."/>
            <person name="Zeesman S."/>
            <person name="Nowaczyk M.J."/>
            <person name="Teshima I."/>
            <person name="Chitayat D."/>
            <person name="Shuman C."/>
            <person name="Weksberg R."/>
            <person name="Zackai E.H."/>
            <person name="Grebe T.A."/>
            <person name="Cox S.R."/>
            <person name="Kirkpatrick S.J."/>
            <person name="Rahman N."/>
            <person name="Friedman J.M."/>
            <person name="Heng H.H.Q."/>
            <person name="Pelicci P.G."/>
            <person name="Lo-Coco F."/>
            <person name="Belloni E."/>
            <person name="Shaffer L.G."/>
            <person name="Pober B."/>
            <person name="Morton C.C."/>
            <person name="Gusella J.F."/>
            <person name="Bruns G.A.P."/>
            <person name="Korf B.R."/>
            <person name="Quade B.J."/>
            <person name="Ligon A.H."/>
            <person name="Ferguson H."/>
            <person name="Higgins A.W."/>
            <person name="Leach N.T."/>
            <person name="Herrick S.R."/>
            <person name="Lemyre E."/>
            <person name="Farra C.G."/>
            <person name="Kim H.-G."/>
            <person name="Summers A.M."/>
            <person name="Gripp K.W."/>
            <person name="Roberts W."/>
            <person name="Szatmari P."/>
            <person name="Winsor E.J.T."/>
            <person name="Grzeschik K.-H."/>
            <person name="Teebi A."/>
            <person name="Minassian B.A."/>
            <person name="Kere J."/>
            <person name="Armengol L."/>
            <person name="Pujana M.A."/>
            <person name="Estivill X."/>
            <person name="Wilson M.D."/>
            <person name="Koop B.F."/>
            <person name="Tosi S."/>
            <person name="Moore G.E."/>
            <person name="Boright A.P."/>
            <person name="Zlotorynski E."/>
            <person name="Kerem B."/>
            <person name="Kroisel P.M."/>
            <person name="Petek E."/>
            <person name="Oscier D.G."/>
            <person name="Mould S.J."/>
            <person name="Doehner H."/>
            <person name="Doehner K."/>
            <person name="Rommens J.M."/>
            <person name="Vincent J.B."/>
            <person name="Venter J.C."/>
            <person name="Li P.W."/>
            <person name="Mural R.J."/>
            <person name="Adams M.D."/>
            <person name="Tsui L.-C."/>
        </authorList>
    </citation>
    <scope>NUCLEOTIDE SEQUENCE [LARGE SCALE GENOMIC DNA]</scope>
    <scope>VARIANT VAL-114</scope>
</reference>
<reference key="3">
    <citation type="journal article" date="2004" name="Genome Res.">
        <title>The status, quality, and expansion of the NIH full-length cDNA project: the Mammalian Gene Collection (MGC).</title>
        <authorList>
            <consortium name="The MGC Project Team"/>
        </authorList>
    </citation>
    <scope>NUCLEOTIDE SEQUENCE [LARGE SCALE MRNA] (ISOFORMS 1 AND 2)</scope>
    <scope>VARIANTS THR-112; VAL-114; TRP-136 AND VAL-251</scope>
    <source>
        <tissue>Brain</tissue>
        <tissue>Testis</tissue>
    </source>
</reference>
<keyword id="KW-0025">Alternative splicing</keyword>
<keyword id="KW-0333">Golgi apparatus</keyword>
<keyword id="KW-0597">Phosphoprotein</keyword>
<keyword id="KW-1185">Reference proteome</keyword>
<comment type="function">
    <text evidence="1">RAB2B effector protein required for accurate acrosome formation and normal male fertility.</text>
</comment>
<comment type="subunit">
    <text evidence="1">Interacts (via N-terminus) with RAB2B (in GTP-bound form).</text>
</comment>
<comment type="interaction">
    <interactant intactId="EBI-12925824">
        <id>Q6NXP2-2</id>
    </interactant>
    <interactant intactId="EBI-752037">
        <id>P61019</id>
        <label>RAB2A</label>
    </interactant>
    <organismsDiffer>false</organismsDiffer>
    <experiments>4</experiments>
</comment>
<comment type="interaction">
    <interactant intactId="EBI-12925824">
        <id>Q6NXP2-2</id>
    </interactant>
    <interactant intactId="EBI-5542466">
        <id>Q8WUD1</id>
        <label>RAB2B</label>
    </interactant>
    <organismsDiffer>false</organismsDiffer>
    <experiments>6</experiments>
</comment>
<comment type="subcellular location">
    <subcellularLocation>
        <location evidence="1">Golgi apparatus</location>
    </subcellularLocation>
</comment>
<comment type="alternative products">
    <event type="alternative splicing"/>
    <isoform>
        <id>Q6NXP2-1</id>
        <name>1</name>
        <sequence type="displayed"/>
    </isoform>
    <isoform>
        <id>Q6NXP2-2</id>
        <name>2</name>
        <sequence type="described" ref="VSP_029581"/>
    </isoform>
</comment>
<comment type="similarity">
    <text evidence="6">Belongs to the GARIN family.</text>
</comment>
<name>GAR1A_HUMAN</name>
<organism>
    <name type="scientific">Homo sapiens</name>
    <name type="common">Human</name>
    <dbReference type="NCBI Taxonomy" id="9606"/>
    <lineage>
        <taxon>Eukaryota</taxon>
        <taxon>Metazoa</taxon>
        <taxon>Chordata</taxon>
        <taxon>Craniata</taxon>
        <taxon>Vertebrata</taxon>
        <taxon>Euteleostomi</taxon>
        <taxon>Mammalia</taxon>
        <taxon>Eutheria</taxon>
        <taxon>Euarchontoglires</taxon>
        <taxon>Primates</taxon>
        <taxon>Haplorrhini</taxon>
        <taxon>Catarrhini</taxon>
        <taxon>Hominidae</taxon>
        <taxon>Homo</taxon>
    </lineage>
</organism>
<sequence length="309" mass="34516">MSKIRGLPPEVREPGPGVELGVENGLLCQLIHSPEFNLFSNSVVFESNFIQTHVPEADFQVTKPGNWRDVCEGSATVILGVTSSVPSLPLPNVLLMANVTWPQGPFTTWSTPGDAPVINLSRLLPLKYVELRIYDRLQRILRVRTVTEKIYYLKLHEKHPEIVFQFWVRLVKILQKGLSITTKDPRIKFTHCLVPKMPTNSTETTPENSLLSSPQPSEPLVLLAAEQTSGSFSQLSGKPQLTADRNNDTAIEIDNCSSYKIPSPVASPINLNIPMRAALSHSLWEQEDWNEHLLQVHIASYLGEHFLGA</sequence>
<gene>
    <name evidence="7" type="primary">GARIN1A</name>
    <name type="synonym">FAM137B</name>
    <name type="synonym">FAM71F2</name>
</gene>
<accession>Q6NXP2</accession>
<accession>Q0VGF6</accession>
<accession>Q0VGF7</accession>
<accession>Q86X39</accession>
<feature type="chain" id="PRO_0000311689" description="Golgi-associated RAB2 interactor protein 1A">
    <location>
        <begin position="1"/>
        <end position="309"/>
    </location>
</feature>
<feature type="modified residue" description="Phosphoserine" evidence="2">
    <location>
        <position position="231"/>
    </location>
</feature>
<feature type="modified residue" description="Phosphoserine" evidence="2">
    <location>
        <position position="263"/>
    </location>
</feature>
<feature type="modified residue" description="Phosphoserine" evidence="2">
    <location>
        <position position="267"/>
    </location>
</feature>
<feature type="splice variant" id="VSP_029581" description="In isoform 2." evidence="5">
    <location>
        <begin position="52"/>
        <end position="60"/>
    </location>
</feature>
<feature type="sequence variant" id="VAR_037267" description="In dbSNP:rs17169357." evidence="4">
    <original>P</original>
    <variation>T</variation>
    <location>
        <position position="112"/>
    </location>
</feature>
<feature type="sequence variant" id="VAR_037268" description="In dbSNP:rs6971819." evidence="3 4">
    <original>D</original>
    <variation>V</variation>
    <location>
        <position position="114"/>
    </location>
</feature>
<feature type="sequence variant" id="VAR_037269" description="In dbSNP:rs6467210." evidence="4">
    <original>R</original>
    <variation>W</variation>
    <location>
        <position position="136"/>
    </location>
</feature>
<feature type="sequence variant" id="VAR_037270" description="In dbSNP:rs1109552." evidence="4">
    <original>I</original>
    <variation>V</variation>
    <location>
        <position position="251"/>
    </location>
</feature>
<dbReference type="EMBL" id="AC018638">
    <property type="status" value="NOT_ANNOTATED_CDS"/>
    <property type="molecule type" value="Genomic_DNA"/>
</dbReference>
<dbReference type="EMBL" id="AC093183">
    <property type="status" value="NOT_ANNOTATED_CDS"/>
    <property type="molecule type" value="Genomic_DNA"/>
</dbReference>
<dbReference type="EMBL" id="CH236950">
    <property type="protein sequence ID" value="EAL24114.1"/>
    <property type="molecule type" value="Genomic_DNA"/>
</dbReference>
<dbReference type="EMBL" id="BC047310">
    <property type="protein sequence ID" value="AAH47310.2"/>
    <property type="molecule type" value="mRNA"/>
</dbReference>
<dbReference type="EMBL" id="BC066973">
    <property type="protein sequence ID" value="AAH66973.2"/>
    <property type="molecule type" value="mRNA"/>
</dbReference>
<dbReference type="EMBL" id="BC105729">
    <property type="protein sequence ID" value="AAI05730.1"/>
    <property type="molecule type" value="mRNA"/>
</dbReference>
<dbReference type="EMBL" id="BC105730">
    <property type="protein sequence ID" value="AAI05731.1"/>
    <property type="molecule type" value="mRNA"/>
</dbReference>
<dbReference type="EMBL" id="BC105731">
    <property type="protein sequence ID" value="AAI05732.1"/>
    <property type="molecule type" value="mRNA"/>
</dbReference>
<dbReference type="CCDS" id="CCDS47701.1">
    <molecule id="Q6NXP2-1"/>
</dbReference>
<dbReference type="CCDS" id="CCDS47702.1">
    <molecule id="Q6NXP2-2"/>
</dbReference>
<dbReference type="RefSeq" id="NP_001012457.3">
    <molecule id="Q6NXP2-1"/>
    <property type="nucleotide sequence ID" value="NM_001012454.6"/>
</dbReference>
<dbReference type="RefSeq" id="NP_001122398.1">
    <molecule id="Q6NXP2-2"/>
    <property type="nucleotide sequence ID" value="NM_001128926.4"/>
</dbReference>
<dbReference type="RefSeq" id="XP_011514430.1">
    <property type="nucleotide sequence ID" value="XM_011516128.2"/>
</dbReference>
<dbReference type="RefSeq" id="XP_011514431.1">
    <property type="nucleotide sequence ID" value="XM_011516129.2"/>
</dbReference>
<dbReference type="RefSeq" id="XP_011514432.1">
    <property type="nucleotide sequence ID" value="XM_011516130.2"/>
</dbReference>
<dbReference type="RefSeq" id="XP_011514433.1">
    <property type="nucleotide sequence ID" value="XM_011516131.2"/>
</dbReference>
<dbReference type="RefSeq" id="XP_011514434.1">
    <property type="nucleotide sequence ID" value="XM_011516132.2"/>
</dbReference>
<dbReference type="BioGRID" id="131394">
    <property type="interactions" value="4"/>
</dbReference>
<dbReference type="FunCoup" id="Q6NXP2">
    <property type="interactions" value="3"/>
</dbReference>
<dbReference type="IntAct" id="Q6NXP2">
    <property type="interactions" value="4"/>
</dbReference>
<dbReference type="STRING" id="9606.ENSP00000493102"/>
<dbReference type="PhosphoSitePlus" id="Q6NXP2"/>
<dbReference type="BioMuta" id="FAM71F2"/>
<dbReference type="DMDM" id="296439354"/>
<dbReference type="MassIVE" id="Q6NXP2"/>
<dbReference type="PaxDb" id="9606-ENSP00000420140"/>
<dbReference type="PeptideAtlas" id="Q6NXP2"/>
<dbReference type="Antibodypedia" id="9588">
    <property type="antibodies" value="39 antibodies from 14 providers"/>
</dbReference>
<dbReference type="DNASU" id="346653"/>
<dbReference type="Ensembl" id="ENST00000641605.1">
    <molecule id="Q6NXP2-1"/>
    <property type="protein sequence ID" value="ENSP00000493102.1"/>
    <property type="gene ID" value="ENSG00000205085.13"/>
</dbReference>
<dbReference type="Ensembl" id="ENST00000641888.1">
    <molecule id="Q6NXP2-2"/>
    <property type="protein sequence ID" value="ENSP00000493352.1"/>
    <property type="gene ID" value="ENSG00000205085.13"/>
</dbReference>
<dbReference type="Ensembl" id="ENST00000641987.1">
    <molecule id="Q6NXP2-2"/>
    <property type="protein sequence ID" value="ENSP00000493021.1"/>
    <property type="gene ID" value="ENSG00000205085.13"/>
</dbReference>
<dbReference type="Ensembl" id="ENST00000682356.1">
    <molecule id="Q6NXP2-2"/>
    <property type="protein sequence ID" value="ENSP00000506740.1"/>
    <property type="gene ID" value="ENSG00000205085.13"/>
</dbReference>
<dbReference type="GeneID" id="346653"/>
<dbReference type="KEGG" id="hsa:346653"/>
<dbReference type="MANE-Select" id="ENST00000682356.1">
    <molecule id="Q6NXP2-2"/>
    <property type="protein sequence ID" value="ENSP00000506740.1"/>
    <property type="RefSeq nucleotide sequence ID" value="NM_001128926.4"/>
    <property type="RefSeq protein sequence ID" value="NP_001122398.1"/>
</dbReference>
<dbReference type="UCSC" id="uc003vnk.6">
    <molecule id="Q6NXP2-1"/>
    <property type="organism name" value="human"/>
</dbReference>
<dbReference type="AGR" id="HGNC:27998"/>
<dbReference type="CTD" id="346653"/>
<dbReference type="DisGeNET" id="346653"/>
<dbReference type="GeneCards" id="GARIN1A"/>
<dbReference type="HGNC" id="HGNC:27998">
    <property type="gene designation" value="GARIN1A"/>
</dbReference>
<dbReference type="HPA" id="ENSG00000205085">
    <property type="expression patterns" value="Tissue enriched (testis)"/>
</dbReference>
<dbReference type="MIM" id="619904">
    <property type="type" value="gene"/>
</dbReference>
<dbReference type="neXtProt" id="NX_Q6NXP2"/>
<dbReference type="OpenTargets" id="ENSG00000205085"/>
<dbReference type="VEuPathDB" id="HostDB:ENSG00000205085"/>
<dbReference type="eggNOG" id="ENOG502S7XV">
    <property type="taxonomic scope" value="Eukaryota"/>
</dbReference>
<dbReference type="GeneTree" id="ENSGT00940000162027"/>
<dbReference type="HOGENOM" id="CLU_069391_1_0_1"/>
<dbReference type="InParanoid" id="Q6NXP2"/>
<dbReference type="OMA" id="RIEFTHC"/>
<dbReference type="OrthoDB" id="9834631at2759"/>
<dbReference type="PAN-GO" id="Q6NXP2">
    <property type="GO annotations" value="0 GO annotations based on evolutionary models"/>
</dbReference>
<dbReference type="PhylomeDB" id="Q6NXP2"/>
<dbReference type="TreeFam" id="TF336050"/>
<dbReference type="PathwayCommons" id="Q6NXP2"/>
<dbReference type="SignaLink" id="Q6NXP2"/>
<dbReference type="BioGRID-ORCS" id="346653">
    <property type="hits" value="17 hits in 1154 CRISPR screens"/>
</dbReference>
<dbReference type="GenomeRNAi" id="346653"/>
<dbReference type="Pharos" id="Q6NXP2">
    <property type="development level" value="Tdark"/>
</dbReference>
<dbReference type="PRO" id="PR:Q6NXP2"/>
<dbReference type="Proteomes" id="UP000005640">
    <property type="component" value="Chromosome 7"/>
</dbReference>
<dbReference type="RNAct" id="Q6NXP2">
    <property type="molecule type" value="protein"/>
</dbReference>
<dbReference type="Bgee" id="ENSG00000205085">
    <property type="expression patterns" value="Expressed in sperm and 98 other cell types or tissues"/>
</dbReference>
<dbReference type="ExpressionAtlas" id="Q6NXP2">
    <property type="expression patterns" value="baseline and differential"/>
</dbReference>
<dbReference type="GO" id="GO:0005794">
    <property type="term" value="C:Golgi apparatus"/>
    <property type="evidence" value="ECO:0000250"/>
    <property type="project" value="UniProtKB"/>
</dbReference>
<dbReference type="GO" id="GO:0001675">
    <property type="term" value="P:acrosome assembly"/>
    <property type="evidence" value="ECO:0000250"/>
    <property type="project" value="UniProtKB"/>
</dbReference>
<dbReference type="InterPro" id="IPR022168">
    <property type="entry name" value="GARIL-like_Rab2B-bd"/>
</dbReference>
<dbReference type="PANTHER" id="PTHR22574">
    <property type="match status" value="1"/>
</dbReference>
<dbReference type="PANTHER" id="PTHR22574:SF10">
    <property type="entry name" value="GOLGI-ASSOCIATED RAB2 INTERACTOR PROTEIN 1A"/>
    <property type="match status" value="1"/>
</dbReference>
<dbReference type="Pfam" id="PF12480">
    <property type="entry name" value="GARIL_Rab2_bd"/>
    <property type="match status" value="1"/>
</dbReference>
<protein>
    <recommendedName>
        <fullName evidence="6">Golgi-associated RAB2 interactor protein 1A</fullName>
    </recommendedName>
</protein>